<feature type="chain" id="PRO_1000165959" description="Large ribosomal subunit protein uL24">
    <location>
        <begin position="1"/>
        <end position="103"/>
    </location>
</feature>
<protein>
    <recommendedName>
        <fullName evidence="1">Large ribosomal subunit protein uL24</fullName>
    </recommendedName>
    <alternativeName>
        <fullName evidence="2">50S ribosomal protein L24</fullName>
    </alternativeName>
</protein>
<proteinExistence type="inferred from homology"/>
<reference key="1">
    <citation type="journal article" date="2009" name="Appl. Environ. Microbiol.">
        <title>Rhizobium sp. strain NGR234 possesses a remarkable number of secretion systems.</title>
        <authorList>
            <person name="Schmeisser C."/>
            <person name="Liesegang H."/>
            <person name="Krysciak D."/>
            <person name="Bakkou N."/>
            <person name="Le Quere A."/>
            <person name="Wollherr A."/>
            <person name="Heinemeyer I."/>
            <person name="Morgenstern B."/>
            <person name="Pommerening-Roeser A."/>
            <person name="Flores M."/>
            <person name="Palacios R."/>
            <person name="Brenner S."/>
            <person name="Gottschalk G."/>
            <person name="Schmitz R.A."/>
            <person name="Broughton W.J."/>
            <person name="Perret X."/>
            <person name="Strittmatter A.W."/>
            <person name="Streit W.R."/>
        </authorList>
    </citation>
    <scope>NUCLEOTIDE SEQUENCE [LARGE SCALE GENOMIC DNA]</scope>
    <source>
        <strain>NBRC 101917 / NGR234</strain>
    </source>
</reference>
<name>RL24_SINFN</name>
<dbReference type="EMBL" id="CP001389">
    <property type="protein sequence ID" value="ACP24984.1"/>
    <property type="molecule type" value="Genomic_DNA"/>
</dbReference>
<dbReference type="RefSeq" id="WP_012707762.1">
    <property type="nucleotide sequence ID" value="NC_012587.1"/>
</dbReference>
<dbReference type="RefSeq" id="YP_002825737.1">
    <property type="nucleotide sequence ID" value="NC_012587.1"/>
</dbReference>
<dbReference type="SMR" id="C3MAZ1"/>
<dbReference type="STRING" id="394.NGR_c12020"/>
<dbReference type="GeneID" id="48972692"/>
<dbReference type="KEGG" id="rhi:NGR_c12020"/>
<dbReference type="PATRIC" id="fig|394.7.peg.4018"/>
<dbReference type="eggNOG" id="COG0198">
    <property type="taxonomic scope" value="Bacteria"/>
</dbReference>
<dbReference type="HOGENOM" id="CLU_093315_2_2_5"/>
<dbReference type="OrthoDB" id="9807419at2"/>
<dbReference type="Proteomes" id="UP000001054">
    <property type="component" value="Chromosome"/>
</dbReference>
<dbReference type="GO" id="GO:1990904">
    <property type="term" value="C:ribonucleoprotein complex"/>
    <property type="evidence" value="ECO:0007669"/>
    <property type="project" value="UniProtKB-KW"/>
</dbReference>
<dbReference type="GO" id="GO:0005840">
    <property type="term" value="C:ribosome"/>
    <property type="evidence" value="ECO:0007669"/>
    <property type="project" value="UniProtKB-KW"/>
</dbReference>
<dbReference type="GO" id="GO:0019843">
    <property type="term" value="F:rRNA binding"/>
    <property type="evidence" value="ECO:0007669"/>
    <property type="project" value="UniProtKB-UniRule"/>
</dbReference>
<dbReference type="GO" id="GO:0003735">
    <property type="term" value="F:structural constituent of ribosome"/>
    <property type="evidence" value="ECO:0007669"/>
    <property type="project" value="InterPro"/>
</dbReference>
<dbReference type="GO" id="GO:0006412">
    <property type="term" value="P:translation"/>
    <property type="evidence" value="ECO:0007669"/>
    <property type="project" value="UniProtKB-UniRule"/>
</dbReference>
<dbReference type="CDD" id="cd06089">
    <property type="entry name" value="KOW_RPL26"/>
    <property type="match status" value="1"/>
</dbReference>
<dbReference type="FunFam" id="2.30.30.30:FF:000004">
    <property type="entry name" value="50S ribosomal protein L24"/>
    <property type="match status" value="1"/>
</dbReference>
<dbReference type="Gene3D" id="2.30.30.30">
    <property type="match status" value="1"/>
</dbReference>
<dbReference type="HAMAP" id="MF_01326_B">
    <property type="entry name" value="Ribosomal_uL24_B"/>
    <property type="match status" value="1"/>
</dbReference>
<dbReference type="InterPro" id="IPR005824">
    <property type="entry name" value="KOW"/>
</dbReference>
<dbReference type="InterPro" id="IPR014722">
    <property type="entry name" value="Rib_uL2_dom2"/>
</dbReference>
<dbReference type="InterPro" id="IPR003256">
    <property type="entry name" value="Ribosomal_uL24"/>
</dbReference>
<dbReference type="InterPro" id="IPR005825">
    <property type="entry name" value="Ribosomal_uL24_CS"/>
</dbReference>
<dbReference type="InterPro" id="IPR041988">
    <property type="entry name" value="Ribosomal_uL24_KOW"/>
</dbReference>
<dbReference type="InterPro" id="IPR008991">
    <property type="entry name" value="Translation_prot_SH3-like_sf"/>
</dbReference>
<dbReference type="NCBIfam" id="TIGR01079">
    <property type="entry name" value="rplX_bact"/>
    <property type="match status" value="1"/>
</dbReference>
<dbReference type="PANTHER" id="PTHR12903">
    <property type="entry name" value="MITOCHONDRIAL RIBOSOMAL PROTEIN L24"/>
    <property type="match status" value="1"/>
</dbReference>
<dbReference type="Pfam" id="PF00467">
    <property type="entry name" value="KOW"/>
    <property type="match status" value="1"/>
</dbReference>
<dbReference type="Pfam" id="PF17136">
    <property type="entry name" value="ribosomal_L24"/>
    <property type="match status" value="1"/>
</dbReference>
<dbReference type="SMART" id="SM00739">
    <property type="entry name" value="KOW"/>
    <property type="match status" value="1"/>
</dbReference>
<dbReference type="SUPFAM" id="SSF50104">
    <property type="entry name" value="Translation proteins SH3-like domain"/>
    <property type="match status" value="1"/>
</dbReference>
<dbReference type="PROSITE" id="PS01108">
    <property type="entry name" value="RIBOSOMAL_L24"/>
    <property type="match status" value="1"/>
</dbReference>
<accession>C3MAZ1</accession>
<gene>
    <name evidence="1" type="primary">rplX</name>
    <name type="ordered locus">NGR_c12020</name>
</gene>
<comment type="function">
    <text evidence="1">One of two assembly initiator proteins, it binds directly to the 5'-end of the 23S rRNA, where it nucleates assembly of the 50S subunit.</text>
</comment>
<comment type="function">
    <text evidence="1">One of the proteins that surrounds the polypeptide exit tunnel on the outside of the subunit.</text>
</comment>
<comment type="subunit">
    <text evidence="1">Part of the 50S ribosomal subunit.</text>
</comment>
<comment type="similarity">
    <text evidence="1">Belongs to the universal ribosomal protein uL24 family.</text>
</comment>
<keyword id="KW-1185">Reference proteome</keyword>
<keyword id="KW-0687">Ribonucleoprotein</keyword>
<keyword id="KW-0689">Ribosomal protein</keyword>
<keyword id="KW-0694">RNA-binding</keyword>
<keyword id="KW-0699">rRNA-binding</keyword>
<organism>
    <name type="scientific">Sinorhizobium fredii (strain NBRC 101917 / NGR234)</name>
    <dbReference type="NCBI Taxonomy" id="394"/>
    <lineage>
        <taxon>Bacteria</taxon>
        <taxon>Pseudomonadati</taxon>
        <taxon>Pseudomonadota</taxon>
        <taxon>Alphaproteobacteria</taxon>
        <taxon>Hyphomicrobiales</taxon>
        <taxon>Rhizobiaceae</taxon>
        <taxon>Sinorhizobium/Ensifer group</taxon>
        <taxon>Sinorhizobium</taxon>
    </lineage>
</organism>
<sequence length="103" mass="11334">MQKIRKGDKVVVLTGKDKGRTGEVIQVMPKEDRAVVRGVNVVKRHQRQTQNQEAGIISKEAPIHLSNIAIADPKDGKPTRVGFKIDGEKKVRVAKRSGEVIDG</sequence>
<evidence type="ECO:0000255" key="1">
    <source>
        <dbReference type="HAMAP-Rule" id="MF_01326"/>
    </source>
</evidence>
<evidence type="ECO:0000305" key="2"/>